<organism>
    <name type="scientific">Saccharolobus solfataricus (strain ATCC 35092 / DSM 1617 / JCM 11322 / P2)</name>
    <name type="common">Sulfolobus solfataricus</name>
    <dbReference type="NCBI Taxonomy" id="273057"/>
    <lineage>
        <taxon>Archaea</taxon>
        <taxon>Thermoproteota</taxon>
        <taxon>Thermoprotei</taxon>
        <taxon>Sulfolobales</taxon>
        <taxon>Sulfolobaceae</taxon>
        <taxon>Saccharolobus</taxon>
    </lineage>
</organism>
<name>RL37A_SACS2</name>
<gene>
    <name evidence="1" type="primary">rpl37ae</name>
    <name type="ordered locus">SSO6418</name>
</gene>
<comment type="function">
    <text evidence="1">Binds to the 23S rRNA.</text>
</comment>
<comment type="cofactor">
    <cofactor evidence="1">
        <name>Zn(2+)</name>
        <dbReference type="ChEBI" id="CHEBI:29105"/>
    </cofactor>
    <text evidence="1">Binds 1 zinc ion per subunit.</text>
</comment>
<comment type="subunit">
    <text evidence="1">Part of the 50S ribosomal subunit.</text>
</comment>
<comment type="similarity">
    <text evidence="1">Belongs to the eukaryotic ribosomal protein eL43 family. Putative zinc-binding subfamily.</text>
</comment>
<comment type="sequence caution" evidence="2">
    <conflict type="erroneous initiation">
        <sequence resource="EMBL-CDS" id="AAK41029"/>
    </conflict>
    <text>Extended N-terminus.</text>
</comment>
<protein>
    <recommendedName>
        <fullName evidence="1">Large ribosomal subunit protein eL43</fullName>
    </recommendedName>
    <alternativeName>
        <fullName evidence="2">50S ribosomal protein L37Ae</fullName>
    </alternativeName>
    <alternativeName>
        <fullName evidence="1">Ribosomal protein L43e</fullName>
    </alternativeName>
</protein>
<accession>Q97ZQ3</accession>
<feature type="chain" id="PRO_0000139854" description="Large ribosomal subunit protein eL43">
    <location>
        <begin position="1"/>
        <end position="70"/>
    </location>
</feature>
<feature type="zinc finger region" description="C4-type" evidence="1">
    <location>
        <begin position="36"/>
        <end position="58"/>
    </location>
</feature>
<feature type="binding site" evidence="1">
    <location>
        <position position="36"/>
    </location>
    <ligand>
        <name>Zn(2+)</name>
        <dbReference type="ChEBI" id="CHEBI:29105"/>
    </ligand>
</feature>
<feature type="binding site" evidence="1">
    <location>
        <position position="39"/>
    </location>
    <ligand>
        <name>Zn(2+)</name>
        <dbReference type="ChEBI" id="CHEBI:29105"/>
    </ligand>
</feature>
<feature type="binding site" evidence="1">
    <location>
        <position position="55"/>
    </location>
    <ligand>
        <name>Zn(2+)</name>
        <dbReference type="ChEBI" id="CHEBI:29105"/>
    </ligand>
</feature>
<feature type="binding site" evidence="1">
    <location>
        <position position="58"/>
    </location>
    <ligand>
        <name>Zn(2+)</name>
        <dbReference type="ChEBI" id="CHEBI:29105"/>
    </ligand>
</feature>
<sequence>MGKVTGISGRFGARYGSTLRKKWKEIMEKRYDEHQCPYCKTTGKVIRLASGIWYCKKCNSKWAGLAYTPY</sequence>
<keyword id="KW-0479">Metal-binding</keyword>
<keyword id="KW-1185">Reference proteome</keyword>
<keyword id="KW-0687">Ribonucleoprotein</keyword>
<keyword id="KW-0689">Ribosomal protein</keyword>
<keyword id="KW-0694">RNA-binding</keyword>
<keyword id="KW-0699">rRNA-binding</keyword>
<keyword id="KW-0862">Zinc</keyword>
<keyword id="KW-0863">Zinc-finger</keyword>
<evidence type="ECO:0000255" key="1">
    <source>
        <dbReference type="HAMAP-Rule" id="MF_00327"/>
    </source>
</evidence>
<evidence type="ECO:0000305" key="2"/>
<dbReference type="EMBL" id="AE006641">
    <property type="protein sequence ID" value="AAK41029.1"/>
    <property type="status" value="ALT_INIT"/>
    <property type="molecule type" value="Genomic_DNA"/>
</dbReference>
<dbReference type="PIR" id="F90221">
    <property type="entry name" value="F90221"/>
</dbReference>
<dbReference type="RefSeq" id="WP_009991302.1">
    <property type="nucleotide sequence ID" value="NC_002754.1"/>
</dbReference>
<dbReference type="SMR" id="Q97ZQ3"/>
<dbReference type="FunCoup" id="Q97ZQ3">
    <property type="interactions" value="185"/>
</dbReference>
<dbReference type="STRING" id="273057.SSO6418"/>
<dbReference type="PaxDb" id="273057-SSO6418"/>
<dbReference type="EnsemblBacteria" id="AAK41029">
    <property type="protein sequence ID" value="AAK41029"/>
    <property type="gene ID" value="SSO6418"/>
</dbReference>
<dbReference type="KEGG" id="sso:SSO6418"/>
<dbReference type="PATRIC" id="fig|273057.12.peg.729"/>
<dbReference type="eggNOG" id="arCOG04208">
    <property type="taxonomic scope" value="Archaea"/>
</dbReference>
<dbReference type="HOGENOM" id="CLU_141199_2_0_2"/>
<dbReference type="InParanoid" id="Q97ZQ3"/>
<dbReference type="PhylomeDB" id="Q97ZQ3"/>
<dbReference type="Proteomes" id="UP000001974">
    <property type="component" value="Chromosome"/>
</dbReference>
<dbReference type="GO" id="GO:1990904">
    <property type="term" value="C:ribonucleoprotein complex"/>
    <property type="evidence" value="ECO:0007669"/>
    <property type="project" value="UniProtKB-KW"/>
</dbReference>
<dbReference type="GO" id="GO:0005840">
    <property type="term" value="C:ribosome"/>
    <property type="evidence" value="ECO:0007669"/>
    <property type="project" value="UniProtKB-KW"/>
</dbReference>
<dbReference type="GO" id="GO:0070180">
    <property type="term" value="F:large ribosomal subunit rRNA binding"/>
    <property type="evidence" value="ECO:0007669"/>
    <property type="project" value="UniProtKB-UniRule"/>
</dbReference>
<dbReference type="GO" id="GO:0003735">
    <property type="term" value="F:structural constituent of ribosome"/>
    <property type="evidence" value="ECO:0007669"/>
    <property type="project" value="InterPro"/>
</dbReference>
<dbReference type="GO" id="GO:0008270">
    <property type="term" value="F:zinc ion binding"/>
    <property type="evidence" value="ECO:0007669"/>
    <property type="project" value="UniProtKB-UniRule"/>
</dbReference>
<dbReference type="GO" id="GO:0006412">
    <property type="term" value="P:translation"/>
    <property type="evidence" value="ECO:0007669"/>
    <property type="project" value="UniProtKB-UniRule"/>
</dbReference>
<dbReference type="Gene3D" id="2.20.25.30">
    <property type="match status" value="1"/>
</dbReference>
<dbReference type="HAMAP" id="MF_00327">
    <property type="entry name" value="Ribosomal_eL43"/>
    <property type="match status" value="1"/>
</dbReference>
<dbReference type="InterPro" id="IPR011331">
    <property type="entry name" value="Ribosomal_eL37/eL43"/>
</dbReference>
<dbReference type="InterPro" id="IPR002674">
    <property type="entry name" value="Ribosomal_eL43"/>
</dbReference>
<dbReference type="InterPro" id="IPR050522">
    <property type="entry name" value="Ribosomal_protein_eL43"/>
</dbReference>
<dbReference type="InterPro" id="IPR011332">
    <property type="entry name" value="Ribosomal_zn-bd"/>
</dbReference>
<dbReference type="NCBIfam" id="NF003058">
    <property type="entry name" value="PRK03976.1"/>
    <property type="match status" value="1"/>
</dbReference>
<dbReference type="PANTHER" id="PTHR48129">
    <property type="entry name" value="60S RIBOSOMAL PROTEIN L37A"/>
    <property type="match status" value="1"/>
</dbReference>
<dbReference type="PANTHER" id="PTHR48129:SF1">
    <property type="entry name" value="LARGE RIBOSOMAL SUBUNIT PROTEIN EL43"/>
    <property type="match status" value="1"/>
</dbReference>
<dbReference type="Pfam" id="PF01780">
    <property type="entry name" value="Ribosomal_L37ae"/>
    <property type="match status" value="1"/>
</dbReference>
<dbReference type="SUPFAM" id="SSF57829">
    <property type="entry name" value="Zn-binding ribosomal proteins"/>
    <property type="match status" value="1"/>
</dbReference>
<reference key="1">
    <citation type="journal article" date="2001" name="Proc. Natl. Acad. Sci. U.S.A.">
        <title>The complete genome of the crenarchaeon Sulfolobus solfataricus P2.</title>
        <authorList>
            <person name="She Q."/>
            <person name="Singh R.K."/>
            <person name="Confalonieri F."/>
            <person name="Zivanovic Y."/>
            <person name="Allard G."/>
            <person name="Awayez M.J."/>
            <person name="Chan-Weiher C.C.-Y."/>
            <person name="Clausen I.G."/>
            <person name="Curtis B.A."/>
            <person name="De Moors A."/>
            <person name="Erauso G."/>
            <person name="Fletcher C."/>
            <person name="Gordon P.M.K."/>
            <person name="Heikamp-de Jong I."/>
            <person name="Jeffries A.C."/>
            <person name="Kozera C.J."/>
            <person name="Medina N."/>
            <person name="Peng X."/>
            <person name="Thi-Ngoc H.P."/>
            <person name="Redder P."/>
            <person name="Schenk M.E."/>
            <person name="Theriault C."/>
            <person name="Tolstrup N."/>
            <person name="Charlebois R.L."/>
            <person name="Doolittle W.F."/>
            <person name="Duguet M."/>
            <person name="Gaasterland T."/>
            <person name="Garrett R.A."/>
            <person name="Ragan M.A."/>
            <person name="Sensen C.W."/>
            <person name="Van der Oost J."/>
        </authorList>
    </citation>
    <scope>NUCLEOTIDE SEQUENCE [LARGE SCALE GENOMIC DNA]</scope>
    <source>
        <strain>ATCC 35092 / DSM 1617 / JCM 11322 / P2</strain>
    </source>
</reference>
<proteinExistence type="inferred from homology"/>